<organism>
    <name type="scientific">Xanthomonas axonopodis pv. citri (strain 306)</name>
    <dbReference type="NCBI Taxonomy" id="190486"/>
    <lineage>
        <taxon>Bacteria</taxon>
        <taxon>Pseudomonadati</taxon>
        <taxon>Pseudomonadota</taxon>
        <taxon>Gammaproteobacteria</taxon>
        <taxon>Lysobacterales</taxon>
        <taxon>Lysobacteraceae</taxon>
        <taxon>Xanthomonas</taxon>
    </lineage>
</organism>
<accession>Q8PJ53</accession>
<evidence type="ECO:0000255" key="1">
    <source>
        <dbReference type="HAMAP-Rule" id="MF_01077"/>
    </source>
</evidence>
<evidence type="ECO:0000256" key="2">
    <source>
        <dbReference type="SAM" id="MobiDB-lite"/>
    </source>
</evidence>
<proteinExistence type="inferred from homology"/>
<dbReference type="EMBL" id="AE008923">
    <property type="protein sequence ID" value="AAM37536.1"/>
    <property type="molecule type" value="Genomic_DNA"/>
</dbReference>
<dbReference type="RefSeq" id="WP_011051768.1">
    <property type="nucleotide sequence ID" value="NC_003919.1"/>
</dbReference>
<dbReference type="SMR" id="Q8PJ53"/>
<dbReference type="GeneID" id="66911778"/>
<dbReference type="KEGG" id="xac:XAC2689"/>
<dbReference type="eggNOG" id="COG0779">
    <property type="taxonomic scope" value="Bacteria"/>
</dbReference>
<dbReference type="HOGENOM" id="CLU_070525_1_1_6"/>
<dbReference type="Proteomes" id="UP000000576">
    <property type="component" value="Chromosome"/>
</dbReference>
<dbReference type="GO" id="GO:0005829">
    <property type="term" value="C:cytosol"/>
    <property type="evidence" value="ECO:0007669"/>
    <property type="project" value="TreeGrafter"/>
</dbReference>
<dbReference type="GO" id="GO:0000028">
    <property type="term" value="P:ribosomal small subunit assembly"/>
    <property type="evidence" value="ECO:0007669"/>
    <property type="project" value="TreeGrafter"/>
</dbReference>
<dbReference type="GO" id="GO:0006412">
    <property type="term" value="P:translation"/>
    <property type="evidence" value="ECO:0007669"/>
    <property type="project" value="TreeGrafter"/>
</dbReference>
<dbReference type="CDD" id="cd01734">
    <property type="entry name" value="YlxS_C"/>
    <property type="match status" value="1"/>
</dbReference>
<dbReference type="FunFam" id="3.30.300.70:FF:000001">
    <property type="entry name" value="Ribosome maturation factor RimP"/>
    <property type="match status" value="1"/>
</dbReference>
<dbReference type="Gene3D" id="2.30.30.180">
    <property type="entry name" value="Ribosome maturation factor RimP, C-terminal domain"/>
    <property type="match status" value="1"/>
</dbReference>
<dbReference type="Gene3D" id="3.30.300.70">
    <property type="entry name" value="RimP-like superfamily, N-terminal"/>
    <property type="match status" value="1"/>
</dbReference>
<dbReference type="HAMAP" id="MF_01077">
    <property type="entry name" value="RimP"/>
    <property type="match status" value="1"/>
</dbReference>
<dbReference type="InterPro" id="IPR003728">
    <property type="entry name" value="Ribosome_maturation_RimP"/>
</dbReference>
<dbReference type="InterPro" id="IPR028998">
    <property type="entry name" value="RimP_C"/>
</dbReference>
<dbReference type="InterPro" id="IPR036847">
    <property type="entry name" value="RimP_C_sf"/>
</dbReference>
<dbReference type="InterPro" id="IPR028989">
    <property type="entry name" value="RimP_N"/>
</dbReference>
<dbReference type="InterPro" id="IPR035956">
    <property type="entry name" value="RimP_N_sf"/>
</dbReference>
<dbReference type="NCBIfam" id="NF000927">
    <property type="entry name" value="PRK00092.1-1"/>
    <property type="match status" value="1"/>
</dbReference>
<dbReference type="NCBIfam" id="NF000931">
    <property type="entry name" value="PRK00092.2-3"/>
    <property type="match status" value="1"/>
</dbReference>
<dbReference type="PANTHER" id="PTHR33867">
    <property type="entry name" value="RIBOSOME MATURATION FACTOR RIMP"/>
    <property type="match status" value="1"/>
</dbReference>
<dbReference type="PANTHER" id="PTHR33867:SF1">
    <property type="entry name" value="RIBOSOME MATURATION FACTOR RIMP"/>
    <property type="match status" value="1"/>
</dbReference>
<dbReference type="Pfam" id="PF17384">
    <property type="entry name" value="DUF150_C"/>
    <property type="match status" value="1"/>
</dbReference>
<dbReference type="Pfam" id="PF02576">
    <property type="entry name" value="RimP_N"/>
    <property type="match status" value="1"/>
</dbReference>
<dbReference type="SUPFAM" id="SSF74942">
    <property type="entry name" value="YhbC-like, C-terminal domain"/>
    <property type="match status" value="1"/>
</dbReference>
<dbReference type="SUPFAM" id="SSF75420">
    <property type="entry name" value="YhbC-like, N-terminal domain"/>
    <property type="match status" value="1"/>
</dbReference>
<comment type="function">
    <text evidence="1">Required for maturation of 30S ribosomal subunits.</text>
</comment>
<comment type="subcellular location">
    <subcellularLocation>
        <location evidence="1">Cytoplasm</location>
    </subcellularLocation>
</comment>
<comment type="similarity">
    <text evidence="1">Belongs to the RimP family.</text>
</comment>
<gene>
    <name evidence="1" type="primary">rimP</name>
    <name type="ordered locus">XAC2689</name>
</gene>
<sequence>MSEKATEIANLLSPTVESLGLELLGVEYLPAPGGATLRLYIDVPLAEQPERVINVDDCERVSREVSAQLDVEDPISGNYTLEVSSPGVDRPLFTLEQFARHTGESAKIVLKLAQDGRRRFQGQILRIDAEAAAVVFAVDGKDVQIGYDNIDKARIVPDWVALGLAPQKPNKPGPKKPGHEKKKPSNESAAGKPRAE</sequence>
<keyword id="KW-0963">Cytoplasm</keyword>
<keyword id="KW-0690">Ribosome biogenesis</keyword>
<name>RIMP_XANAC</name>
<feature type="chain" id="PRO_0000181954" description="Ribosome maturation factor RimP">
    <location>
        <begin position="1"/>
        <end position="196"/>
    </location>
</feature>
<feature type="region of interest" description="Disordered" evidence="2">
    <location>
        <begin position="164"/>
        <end position="196"/>
    </location>
</feature>
<feature type="compositionally biased region" description="Basic residues" evidence="2">
    <location>
        <begin position="173"/>
        <end position="182"/>
    </location>
</feature>
<reference key="1">
    <citation type="journal article" date="2002" name="Nature">
        <title>Comparison of the genomes of two Xanthomonas pathogens with differing host specificities.</title>
        <authorList>
            <person name="da Silva A.C.R."/>
            <person name="Ferro J.A."/>
            <person name="Reinach F.C."/>
            <person name="Farah C.S."/>
            <person name="Furlan L.R."/>
            <person name="Quaggio R.B."/>
            <person name="Monteiro-Vitorello C.B."/>
            <person name="Van Sluys M.A."/>
            <person name="Almeida N.F. Jr."/>
            <person name="Alves L.M.C."/>
            <person name="do Amaral A.M."/>
            <person name="Bertolini M.C."/>
            <person name="Camargo L.E.A."/>
            <person name="Camarotte G."/>
            <person name="Cannavan F."/>
            <person name="Cardozo J."/>
            <person name="Chambergo F."/>
            <person name="Ciapina L.P."/>
            <person name="Cicarelli R.M.B."/>
            <person name="Coutinho L.L."/>
            <person name="Cursino-Santos J.R."/>
            <person name="El-Dorry H."/>
            <person name="Faria J.B."/>
            <person name="Ferreira A.J.S."/>
            <person name="Ferreira R.C.C."/>
            <person name="Ferro M.I.T."/>
            <person name="Formighieri E.F."/>
            <person name="Franco M.C."/>
            <person name="Greggio C.C."/>
            <person name="Gruber A."/>
            <person name="Katsuyama A.M."/>
            <person name="Kishi L.T."/>
            <person name="Leite R.P."/>
            <person name="Lemos E.G.M."/>
            <person name="Lemos M.V.F."/>
            <person name="Locali E.C."/>
            <person name="Machado M.A."/>
            <person name="Madeira A.M.B.N."/>
            <person name="Martinez-Rossi N.M."/>
            <person name="Martins E.C."/>
            <person name="Meidanis J."/>
            <person name="Menck C.F.M."/>
            <person name="Miyaki C.Y."/>
            <person name="Moon D.H."/>
            <person name="Moreira L.M."/>
            <person name="Novo M.T.M."/>
            <person name="Okura V.K."/>
            <person name="Oliveira M.C."/>
            <person name="Oliveira V.R."/>
            <person name="Pereira H.A."/>
            <person name="Rossi A."/>
            <person name="Sena J.A.D."/>
            <person name="Silva C."/>
            <person name="de Souza R.F."/>
            <person name="Spinola L.A.F."/>
            <person name="Takita M.A."/>
            <person name="Tamura R.E."/>
            <person name="Teixeira E.C."/>
            <person name="Tezza R.I.D."/>
            <person name="Trindade dos Santos M."/>
            <person name="Truffi D."/>
            <person name="Tsai S.M."/>
            <person name="White F.F."/>
            <person name="Setubal J.C."/>
            <person name="Kitajima J.P."/>
        </authorList>
    </citation>
    <scope>NUCLEOTIDE SEQUENCE [LARGE SCALE GENOMIC DNA]</scope>
    <source>
        <strain>306</strain>
    </source>
</reference>
<protein>
    <recommendedName>
        <fullName evidence="1">Ribosome maturation factor RimP</fullName>
    </recommendedName>
</protein>